<protein>
    <recommendedName>
        <fullName evidence="1">Phosphomethylpyrimidine synthase</fullName>
        <ecNumber evidence="1">4.1.99.17</ecNumber>
    </recommendedName>
    <alternativeName>
        <fullName evidence="1">Hydroxymethylpyrimidine phosphate synthase</fullName>
        <shortName evidence="1">HMP-P synthase</shortName>
        <shortName evidence="1">HMP-phosphate synthase</shortName>
        <shortName evidence="1">HMPP synthase</shortName>
    </alternativeName>
    <alternativeName>
        <fullName evidence="1">Thiamine biosynthesis protein ThiC</fullName>
    </alternativeName>
</protein>
<evidence type="ECO:0000255" key="1">
    <source>
        <dbReference type="HAMAP-Rule" id="MF_00089"/>
    </source>
</evidence>
<evidence type="ECO:0000256" key="2">
    <source>
        <dbReference type="SAM" id="MobiDB-lite"/>
    </source>
</evidence>
<organism>
    <name type="scientific">Streptomyces avermitilis (strain ATCC 31267 / DSM 46492 / JCM 5070 / NBRC 14893 / NCIMB 12804 / NRRL 8165 / MA-4680)</name>
    <dbReference type="NCBI Taxonomy" id="227882"/>
    <lineage>
        <taxon>Bacteria</taxon>
        <taxon>Bacillati</taxon>
        <taxon>Actinomycetota</taxon>
        <taxon>Actinomycetes</taxon>
        <taxon>Kitasatosporales</taxon>
        <taxon>Streptomycetaceae</taxon>
        <taxon>Streptomyces</taxon>
    </lineage>
</organism>
<feature type="chain" id="PRO_0000152838" description="Phosphomethylpyrimidine synthase">
    <location>
        <begin position="1"/>
        <end position="601"/>
    </location>
</feature>
<feature type="region of interest" description="Disordered" evidence="2">
    <location>
        <begin position="1"/>
        <end position="31"/>
    </location>
</feature>
<feature type="region of interest" description="Disordered" evidence="2">
    <location>
        <begin position="100"/>
        <end position="141"/>
    </location>
</feature>
<feature type="compositionally biased region" description="Basic and acidic residues" evidence="2">
    <location>
        <begin position="100"/>
        <end position="112"/>
    </location>
</feature>
<feature type="binding site" evidence="1">
    <location>
        <position position="208"/>
    </location>
    <ligand>
        <name>substrate</name>
    </ligand>
</feature>
<feature type="binding site" evidence="1">
    <location>
        <position position="237"/>
    </location>
    <ligand>
        <name>substrate</name>
    </ligand>
</feature>
<feature type="binding site" evidence="1">
    <location>
        <position position="266"/>
    </location>
    <ligand>
        <name>substrate</name>
    </ligand>
</feature>
<feature type="binding site" evidence="1">
    <location>
        <position position="302"/>
    </location>
    <ligand>
        <name>substrate</name>
    </ligand>
</feature>
<feature type="binding site" evidence="1">
    <location>
        <begin position="322"/>
        <end position="324"/>
    </location>
    <ligand>
        <name>substrate</name>
    </ligand>
</feature>
<feature type="binding site" evidence="1">
    <location>
        <begin position="363"/>
        <end position="366"/>
    </location>
    <ligand>
        <name>substrate</name>
    </ligand>
</feature>
<feature type="binding site" evidence="1">
    <location>
        <position position="402"/>
    </location>
    <ligand>
        <name>substrate</name>
    </ligand>
</feature>
<feature type="binding site" evidence="1">
    <location>
        <position position="406"/>
    </location>
    <ligand>
        <name>Zn(2+)</name>
        <dbReference type="ChEBI" id="CHEBI:29105"/>
    </ligand>
</feature>
<feature type="binding site" evidence="1">
    <location>
        <position position="429"/>
    </location>
    <ligand>
        <name>substrate</name>
    </ligand>
</feature>
<feature type="binding site" evidence="1">
    <location>
        <position position="470"/>
    </location>
    <ligand>
        <name>Zn(2+)</name>
        <dbReference type="ChEBI" id="CHEBI:29105"/>
    </ligand>
</feature>
<feature type="binding site" evidence="1">
    <location>
        <position position="550"/>
    </location>
    <ligand>
        <name>[4Fe-4S] cluster</name>
        <dbReference type="ChEBI" id="CHEBI:49883"/>
        <note>4Fe-4S-S-AdoMet</note>
    </ligand>
</feature>
<feature type="binding site" evidence="1">
    <location>
        <position position="553"/>
    </location>
    <ligand>
        <name>[4Fe-4S] cluster</name>
        <dbReference type="ChEBI" id="CHEBI:49883"/>
        <note>4Fe-4S-S-AdoMet</note>
    </ligand>
</feature>
<feature type="binding site" evidence="1">
    <location>
        <position position="558"/>
    </location>
    <ligand>
        <name>[4Fe-4S] cluster</name>
        <dbReference type="ChEBI" id="CHEBI:49883"/>
        <note>4Fe-4S-S-AdoMet</note>
    </ligand>
</feature>
<sequence length="601" mass="66486">MTNKDARTPASSQTGEALASPQGDQEAGKSIGWHKAYVAGSRPDLRVPVRQVHLTNGESVTLYDTSGPYTDPSVDTDVRRGLAPLRENWIIARGDTEEYAGRPVRPEDDGIKHTSPRGGLRNLDAVFPGRPRQPRRGRDGQAVTQLAYARRGEITPEMEFVAVRENVSAEVVREEIAAGRAVMPVNVNHPEIEPMIIGKRFLVKVNANIGNSAVTSSIEEEVEKMTWATRWGADTVMDLSTGRNIHTTREWVLRNSPVPIGTVPLYQALEKVDGRAEELTWEIYKDTVIEQAEQGVDYMTVHAGVRLPYVPLTANRKTGIVSRGGSIMAAWCLAHHKESFLYENFEELCEILAAYDVTYSLGDGLRPGSIADANDEAQFAELRTLGELNRIAKRFNVQTMIEGPGHVPMHKIKENIDLQQEICDEAPFYTLGPLTTDVAPAYDHITSGIGAAMIAWWGTAMLCYVTPKEHLGLPNRDDVKTGVITYKIAAHAADLAKGHPGAQEWDDALSDARFEFRWEDQFNLALDPDTAREFHDETLPAEPAKTAHFCSMCGPKFCSMKISQDIRREHGGTRTEVEEGMAQKSKEFAAAGNRVYLPLAD</sequence>
<reference key="1">
    <citation type="journal article" date="2001" name="Proc. Natl. Acad. Sci. U.S.A.">
        <title>Genome sequence of an industrial microorganism Streptomyces avermitilis: deducing the ability of producing secondary metabolites.</title>
        <authorList>
            <person name="Omura S."/>
            <person name="Ikeda H."/>
            <person name="Ishikawa J."/>
            <person name="Hanamoto A."/>
            <person name="Takahashi C."/>
            <person name="Shinose M."/>
            <person name="Takahashi Y."/>
            <person name="Horikawa H."/>
            <person name="Nakazawa H."/>
            <person name="Osonoe T."/>
            <person name="Kikuchi H."/>
            <person name="Shiba T."/>
            <person name="Sakaki Y."/>
            <person name="Hattori M."/>
        </authorList>
    </citation>
    <scope>NUCLEOTIDE SEQUENCE [LARGE SCALE GENOMIC DNA]</scope>
    <source>
        <strain>ATCC 31267 / DSM 46492 / JCM 5070 / NBRC 14893 / NCIMB 12804 / NRRL 8165 / MA-4680</strain>
    </source>
</reference>
<reference key="2">
    <citation type="journal article" date="2003" name="Nat. Biotechnol.">
        <title>Complete genome sequence and comparative analysis of the industrial microorganism Streptomyces avermitilis.</title>
        <authorList>
            <person name="Ikeda H."/>
            <person name="Ishikawa J."/>
            <person name="Hanamoto A."/>
            <person name="Shinose M."/>
            <person name="Kikuchi H."/>
            <person name="Shiba T."/>
            <person name="Sakaki Y."/>
            <person name="Hattori M."/>
            <person name="Omura S."/>
        </authorList>
    </citation>
    <scope>NUCLEOTIDE SEQUENCE [LARGE SCALE GENOMIC DNA]</scope>
    <source>
        <strain>ATCC 31267 / DSM 46492 / JCM 5070 / NBRC 14893 / NCIMB 12804 / NRRL 8165 / MA-4680</strain>
    </source>
</reference>
<name>THIC_STRAW</name>
<comment type="function">
    <text evidence="1">Catalyzes the synthesis of the hydroxymethylpyrimidine phosphate (HMP-P) moiety of thiamine from aminoimidazole ribotide (AIR) in a radical S-adenosyl-L-methionine (SAM)-dependent reaction.</text>
</comment>
<comment type="catalytic activity">
    <reaction evidence="1">
        <text>5-amino-1-(5-phospho-beta-D-ribosyl)imidazole + S-adenosyl-L-methionine = 4-amino-2-methyl-5-(phosphooxymethyl)pyrimidine + CO + 5'-deoxyadenosine + formate + L-methionine + 3 H(+)</text>
        <dbReference type="Rhea" id="RHEA:24840"/>
        <dbReference type="ChEBI" id="CHEBI:15378"/>
        <dbReference type="ChEBI" id="CHEBI:15740"/>
        <dbReference type="ChEBI" id="CHEBI:17245"/>
        <dbReference type="ChEBI" id="CHEBI:17319"/>
        <dbReference type="ChEBI" id="CHEBI:57844"/>
        <dbReference type="ChEBI" id="CHEBI:58354"/>
        <dbReference type="ChEBI" id="CHEBI:59789"/>
        <dbReference type="ChEBI" id="CHEBI:137981"/>
        <dbReference type="EC" id="4.1.99.17"/>
    </reaction>
</comment>
<comment type="cofactor">
    <cofactor evidence="1">
        <name>[4Fe-4S] cluster</name>
        <dbReference type="ChEBI" id="CHEBI:49883"/>
    </cofactor>
    <text evidence="1">Binds 1 [4Fe-4S] cluster per subunit. The cluster is coordinated with 3 cysteines and an exchangeable S-adenosyl-L-methionine.</text>
</comment>
<comment type="pathway">
    <text evidence="1">Cofactor biosynthesis; thiamine diphosphate biosynthesis.</text>
</comment>
<comment type="similarity">
    <text evidence="1">Belongs to the ThiC family.</text>
</comment>
<proteinExistence type="inferred from homology"/>
<keyword id="KW-0004">4Fe-4S</keyword>
<keyword id="KW-0408">Iron</keyword>
<keyword id="KW-0411">Iron-sulfur</keyword>
<keyword id="KW-0456">Lyase</keyword>
<keyword id="KW-0479">Metal-binding</keyword>
<keyword id="KW-1185">Reference proteome</keyword>
<keyword id="KW-0949">S-adenosyl-L-methionine</keyword>
<keyword id="KW-0784">Thiamine biosynthesis</keyword>
<keyword id="KW-0862">Zinc</keyword>
<accession>Q82FI7</accession>
<gene>
    <name evidence="1" type="primary">thiC</name>
    <name type="synonym">thiA</name>
    <name type="ordered locus">SAV_4265</name>
</gene>
<dbReference type="EC" id="4.1.99.17" evidence="1"/>
<dbReference type="EMBL" id="BA000030">
    <property type="protein sequence ID" value="BAC71977.1"/>
    <property type="molecule type" value="Genomic_DNA"/>
</dbReference>
<dbReference type="RefSeq" id="WP_010985692.1">
    <property type="nucleotide sequence ID" value="NZ_JZJK01000079.1"/>
</dbReference>
<dbReference type="SMR" id="Q82FI7"/>
<dbReference type="GeneID" id="41541347"/>
<dbReference type="KEGG" id="sma:SAVERM_4265"/>
<dbReference type="eggNOG" id="COG0422">
    <property type="taxonomic scope" value="Bacteria"/>
</dbReference>
<dbReference type="HOGENOM" id="CLU_013181_2_1_11"/>
<dbReference type="OrthoDB" id="9805897at2"/>
<dbReference type="UniPathway" id="UPA00060"/>
<dbReference type="Proteomes" id="UP000000428">
    <property type="component" value="Chromosome"/>
</dbReference>
<dbReference type="GO" id="GO:0005829">
    <property type="term" value="C:cytosol"/>
    <property type="evidence" value="ECO:0007669"/>
    <property type="project" value="TreeGrafter"/>
</dbReference>
<dbReference type="GO" id="GO:0051539">
    <property type="term" value="F:4 iron, 4 sulfur cluster binding"/>
    <property type="evidence" value="ECO:0007669"/>
    <property type="project" value="UniProtKB-KW"/>
</dbReference>
<dbReference type="GO" id="GO:0016830">
    <property type="term" value="F:carbon-carbon lyase activity"/>
    <property type="evidence" value="ECO:0007669"/>
    <property type="project" value="InterPro"/>
</dbReference>
<dbReference type="GO" id="GO:0008270">
    <property type="term" value="F:zinc ion binding"/>
    <property type="evidence" value="ECO:0007669"/>
    <property type="project" value="UniProtKB-UniRule"/>
</dbReference>
<dbReference type="GO" id="GO:0009228">
    <property type="term" value="P:thiamine biosynthetic process"/>
    <property type="evidence" value="ECO:0007669"/>
    <property type="project" value="UniProtKB-KW"/>
</dbReference>
<dbReference type="GO" id="GO:0009229">
    <property type="term" value="P:thiamine diphosphate biosynthetic process"/>
    <property type="evidence" value="ECO:0007669"/>
    <property type="project" value="UniProtKB-UniRule"/>
</dbReference>
<dbReference type="FunFam" id="3.20.20.540:FF:000001">
    <property type="entry name" value="Phosphomethylpyrimidine synthase"/>
    <property type="match status" value="1"/>
</dbReference>
<dbReference type="Gene3D" id="6.10.250.620">
    <property type="match status" value="1"/>
</dbReference>
<dbReference type="Gene3D" id="3.20.20.540">
    <property type="entry name" value="Radical SAM ThiC family, central domain"/>
    <property type="match status" value="1"/>
</dbReference>
<dbReference type="HAMAP" id="MF_00089">
    <property type="entry name" value="ThiC"/>
    <property type="match status" value="1"/>
</dbReference>
<dbReference type="InterPro" id="IPR037509">
    <property type="entry name" value="ThiC"/>
</dbReference>
<dbReference type="InterPro" id="IPR025747">
    <property type="entry name" value="ThiC-associated_dom"/>
</dbReference>
<dbReference type="InterPro" id="IPR038521">
    <property type="entry name" value="ThiC/Bza_core_dom"/>
</dbReference>
<dbReference type="InterPro" id="IPR002817">
    <property type="entry name" value="ThiC/BzaA/B"/>
</dbReference>
<dbReference type="NCBIfam" id="NF006763">
    <property type="entry name" value="PRK09284.1"/>
    <property type="match status" value="1"/>
</dbReference>
<dbReference type="NCBIfam" id="NF009895">
    <property type="entry name" value="PRK13352.1"/>
    <property type="match status" value="1"/>
</dbReference>
<dbReference type="NCBIfam" id="TIGR00190">
    <property type="entry name" value="thiC"/>
    <property type="match status" value="1"/>
</dbReference>
<dbReference type="PANTHER" id="PTHR30557:SF1">
    <property type="entry name" value="PHOSPHOMETHYLPYRIMIDINE SYNTHASE, CHLOROPLASTIC"/>
    <property type="match status" value="1"/>
</dbReference>
<dbReference type="PANTHER" id="PTHR30557">
    <property type="entry name" value="THIAMINE BIOSYNTHESIS PROTEIN THIC"/>
    <property type="match status" value="1"/>
</dbReference>
<dbReference type="Pfam" id="PF13667">
    <property type="entry name" value="ThiC-associated"/>
    <property type="match status" value="1"/>
</dbReference>
<dbReference type="Pfam" id="PF01964">
    <property type="entry name" value="ThiC_Rad_SAM"/>
    <property type="match status" value="1"/>
</dbReference>
<dbReference type="SFLD" id="SFLDF00407">
    <property type="entry name" value="phosphomethylpyrimidine_syntha"/>
    <property type="match status" value="1"/>
</dbReference>
<dbReference type="SFLD" id="SFLDG01114">
    <property type="entry name" value="phosphomethylpyrimidine_syntha"/>
    <property type="match status" value="1"/>
</dbReference>
<dbReference type="SFLD" id="SFLDS00113">
    <property type="entry name" value="Radical_SAM_Phosphomethylpyrim"/>
    <property type="match status" value="1"/>
</dbReference>